<reference key="1">
    <citation type="journal article" date="2001" name="Nature">
        <title>Genome sequence of enterohaemorrhagic Escherichia coli O157:H7.</title>
        <authorList>
            <person name="Perna N.T."/>
            <person name="Plunkett G. III"/>
            <person name="Burland V."/>
            <person name="Mau B."/>
            <person name="Glasner J.D."/>
            <person name="Rose D.J."/>
            <person name="Mayhew G.F."/>
            <person name="Evans P.S."/>
            <person name="Gregor J."/>
            <person name="Kirkpatrick H.A."/>
            <person name="Posfai G."/>
            <person name="Hackett J."/>
            <person name="Klink S."/>
            <person name="Boutin A."/>
            <person name="Shao Y."/>
            <person name="Miller L."/>
            <person name="Grotbeck E.J."/>
            <person name="Davis N.W."/>
            <person name="Lim A."/>
            <person name="Dimalanta E.T."/>
            <person name="Potamousis K."/>
            <person name="Apodaca J."/>
            <person name="Anantharaman T.S."/>
            <person name="Lin J."/>
            <person name="Yen G."/>
            <person name="Schwartz D.C."/>
            <person name="Welch R.A."/>
            <person name="Blattner F.R."/>
        </authorList>
    </citation>
    <scope>NUCLEOTIDE SEQUENCE [LARGE SCALE GENOMIC DNA]</scope>
    <source>
        <strain>O157:H7 / EDL933 / ATCC 700927 / EHEC</strain>
    </source>
</reference>
<reference key="2">
    <citation type="journal article" date="2001" name="DNA Res.">
        <title>Complete genome sequence of enterohemorrhagic Escherichia coli O157:H7 and genomic comparison with a laboratory strain K-12.</title>
        <authorList>
            <person name="Hayashi T."/>
            <person name="Makino K."/>
            <person name="Ohnishi M."/>
            <person name="Kurokawa K."/>
            <person name="Ishii K."/>
            <person name="Yokoyama K."/>
            <person name="Han C.-G."/>
            <person name="Ohtsubo E."/>
            <person name="Nakayama K."/>
            <person name="Murata T."/>
            <person name="Tanaka M."/>
            <person name="Tobe T."/>
            <person name="Iida T."/>
            <person name="Takami H."/>
            <person name="Honda T."/>
            <person name="Sasakawa C."/>
            <person name="Ogasawara N."/>
            <person name="Yasunaga T."/>
            <person name="Kuhara S."/>
            <person name="Shiba T."/>
            <person name="Hattori M."/>
            <person name="Shinagawa H."/>
        </authorList>
    </citation>
    <scope>NUCLEOTIDE SEQUENCE [LARGE SCALE GENOMIC DNA]</scope>
    <source>
        <strain>O157:H7 / Sakai / RIMD 0509952 / EHEC</strain>
    </source>
</reference>
<evidence type="ECO:0000250" key="1"/>
<evidence type="ECO:0000255" key="2">
    <source>
        <dbReference type="PROSITE-ProRule" id="PRU00254"/>
    </source>
</evidence>
<evidence type="ECO:0000256" key="3">
    <source>
        <dbReference type="SAM" id="MobiDB-lite"/>
    </source>
</evidence>
<accession>P0ACS3</accession>
<accession>P22538</accession>
<accession>Q53442</accession>
<proteinExistence type="inferred from homology"/>
<comment type="function">
    <text evidence="1">Activates the transcription of the soxS gene which itself controls the superoxide response regulon. SoxR contains a 2Fe-2S iron-sulfur cluster that may act as a redox sensor system that recognizes superoxide. The variable redox state of the Fe-S cluster is employed in vivo to modulate the transcriptional activity of SoxR in response to specific types of oxidative stress. Upon reduction of 2Fe-2S cluster, SoxR reversibly loses its transcriptional activity, but retains its DNA binding affinity (By similarity).</text>
</comment>
<comment type="subunit">
    <text evidence="1">Homodimer.</text>
</comment>
<name>SOXR_ECO57</name>
<feature type="chain" id="PRO_0000098151" description="Redox-sensitive transcriptional activator SoxR">
    <location>
        <begin position="1"/>
        <end position="154"/>
    </location>
</feature>
<feature type="domain" description="HTH merR-type" evidence="2">
    <location>
        <begin position="11"/>
        <end position="79"/>
    </location>
</feature>
<feature type="DNA-binding region" description="H-T-H motif" evidence="2">
    <location>
        <begin position="14"/>
        <end position="33"/>
    </location>
</feature>
<feature type="region of interest" description="Might be part of a sensor region" evidence="1">
    <location>
        <begin position="119"/>
        <end position="130"/>
    </location>
</feature>
<feature type="region of interest" description="Disordered" evidence="3">
    <location>
        <begin position="135"/>
        <end position="154"/>
    </location>
</feature>
<feature type="binding site" evidence="1">
    <location>
        <position position="119"/>
    </location>
    <ligand>
        <name>[2Fe-2S] cluster</name>
        <dbReference type="ChEBI" id="CHEBI:190135"/>
    </ligand>
</feature>
<feature type="binding site" evidence="1">
    <location>
        <position position="122"/>
    </location>
    <ligand>
        <name>[2Fe-2S] cluster</name>
        <dbReference type="ChEBI" id="CHEBI:190135"/>
    </ligand>
</feature>
<feature type="binding site" evidence="1">
    <location>
        <position position="124"/>
    </location>
    <ligand>
        <name>[2Fe-2S] cluster</name>
        <dbReference type="ChEBI" id="CHEBI:190135"/>
    </ligand>
</feature>
<feature type="binding site" evidence="1">
    <location>
        <position position="130"/>
    </location>
    <ligand>
        <name>[2Fe-2S] cluster</name>
        <dbReference type="ChEBI" id="CHEBI:190135"/>
    </ligand>
</feature>
<organism>
    <name type="scientific">Escherichia coli O157:H7</name>
    <dbReference type="NCBI Taxonomy" id="83334"/>
    <lineage>
        <taxon>Bacteria</taxon>
        <taxon>Pseudomonadati</taxon>
        <taxon>Pseudomonadota</taxon>
        <taxon>Gammaproteobacteria</taxon>
        <taxon>Enterobacterales</taxon>
        <taxon>Enterobacteriaceae</taxon>
        <taxon>Escherichia</taxon>
    </lineage>
</organism>
<keyword id="KW-0001">2Fe-2S</keyword>
<keyword id="KW-0010">Activator</keyword>
<keyword id="KW-0238">DNA-binding</keyword>
<keyword id="KW-0408">Iron</keyword>
<keyword id="KW-0411">Iron-sulfur</keyword>
<keyword id="KW-0479">Metal-binding</keyword>
<keyword id="KW-1185">Reference proteome</keyword>
<keyword id="KW-0804">Transcription</keyword>
<keyword id="KW-0805">Transcription regulation</keyword>
<sequence length="154" mass="17150">MEKKLPRIKALLTPGEVAKRSGVAVSALHFYESKGLITSIRNSGNQRRYKRDVLRYVAIIKIAQRIGIPLATIGEAFGVLPEGHTLSAKEWKQLSSQWREELDRRIHTLVALRDELDGCIGCGCLSRSDCPLRNPGDRLGEEGTGARLLEDEQN</sequence>
<dbReference type="EMBL" id="AE005174">
    <property type="protein sequence ID" value="AAG59261.1"/>
    <property type="molecule type" value="Genomic_DNA"/>
</dbReference>
<dbReference type="EMBL" id="BA000007">
    <property type="protein sequence ID" value="BAB38468.1"/>
    <property type="molecule type" value="Genomic_DNA"/>
</dbReference>
<dbReference type="PIR" id="A86100">
    <property type="entry name" value="A86100"/>
</dbReference>
<dbReference type="PIR" id="E91259">
    <property type="entry name" value="E91259"/>
</dbReference>
<dbReference type="RefSeq" id="NP_313072.1">
    <property type="nucleotide sequence ID" value="NC_002695.1"/>
</dbReference>
<dbReference type="RefSeq" id="WP_000412428.1">
    <property type="nucleotide sequence ID" value="NZ_VOAI01000008.1"/>
</dbReference>
<dbReference type="SMR" id="P0ACS3"/>
<dbReference type="STRING" id="155864.Z5662"/>
<dbReference type="GeneID" id="86944605"/>
<dbReference type="GeneID" id="914292"/>
<dbReference type="KEGG" id="ece:Z5662"/>
<dbReference type="KEGG" id="ecs:ECs_5045"/>
<dbReference type="PATRIC" id="fig|386585.9.peg.5268"/>
<dbReference type="eggNOG" id="COG0789">
    <property type="taxonomic scope" value="Bacteria"/>
</dbReference>
<dbReference type="HOGENOM" id="CLU_060077_5_1_6"/>
<dbReference type="OMA" id="CLSIESC"/>
<dbReference type="Proteomes" id="UP000000558">
    <property type="component" value="Chromosome"/>
</dbReference>
<dbReference type="Proteomes" id="UP000002519">
    <property type="component" value="Chromosome"/>
</dbReference>
<dbReference type="GO" id="GO:0051537">
    <property type="term" value="F:2 iron, 2 sulfur cluster binding"/>
    <property type="evidence" value="ECO:0007669"/>
    <property type="project" value="UniProtKB-KW"/>
</dbReference>
<dbReference type="GO" id="GO:0003677">
    <property type="term" value="F:DNA binding"/>
    <property type="evidence" value="ECO:0007669"/>
    <property type="project" value="UniProtKB-KW"/>
</dbReference>
<dbReference type="GO" id="GO:0003700">
    <property type="term" value="F:DNA-binding transcription factor activity"/>
    <property type="evidence" value="ECO:0007669"/>
    <property type="project" value="InterPro"/>
</dbReference>
<dbReference type="GO" id="GO:0046872">
    <property type="term" value="F:metal ion binding"/>
    <property type="evidence" value="ECO:0007669"/>
    <property type="project" value="UniProtKB-KW"/>
</dbReference>
<dbReference type="GO" id="GO:0006979">
    <property type="term" value="P:response to oxidative stress"/>
    <property type="evidence" value="ECO:0007669"/>
    <property type="project" value="InterPro"/>
</dbReference>
<dbReference type="CDD" id="cd01110">
    <property type="entry name" value="HTH_SoxR"/>
    <property type="match status" value="1"/>
</dbReference>
<dbReference type="FunFam" id="1.10.1660.10:FF:000002">
    <property type="entry name" value="Redox-sensitive transcriptional activator SoxR"/>
    <property type="match status" value="1"/>
</dbReference>
<dbReference type="Gene3D" id="1.10.1660.10">
    <property type="match status" value="1"/>
</dbReference>
<dbReference type="InterPro" id="IPR009061">
    <property type="entry name" value="DNA-bd_dom_put_sf"/>
</dbReference>
<dbReference type="InterPro" id="IPR000551">
    <property type="entry name" value="MerR-type_HTH_dom"/>
</dbReference>
<dbReference type="InterPro" id="IPR047057">
    <property type="entry name" value="MerR_fam"/>
</dbReference>
<dbReference type="InterPro" id="IPR010211">
    <property type="entry name" value="Redox-sen_tscrpt-act_SoxR"/>
</dbReference>
<dbReference type="InterPro" id="IPR015358">
    <property type="entry name" value="Tscrpt_reg_MerR_DNA-bd"/>
</dbReference>
<dbReference type="NCBIfam" id="TIGR01950">
    <property type="entry name" value="SoxR"/>
    <property type="match status" value="1"/>
</dbReference>
<dbReference type="PANTHER" id="PTHR30204">
    <property type="entry name" value="REDOX-CYCLING DRUG-SENSING TRANSCRIPTIONAL ACTIVATOR SOXR"/>
    <property type="match status" value="1"/>
</dbReference>
<dbReference type="PANTHER" id="PTHR30204:SF0">
    <property type="entry name" value="REDOX-SENSITIVE TRANSCRIPTIONAL ACTIVATOR SOXR"/>
    <property type="match status" value="1"/>
</dbReference>
<dbReference type="Pfam" id="PF00376">
    <property type="entry name" value="MerR"/>
    <property type="match status" value="1"/>
</dbReference>
<dbReference type="Pfam" id="PF09278">
    <property type="entry name" value="MerR-DNA-bind"/>
    <property type="match status" value="1"/>
</dbReference>
<dbReference type="PRINTS" id="PR00040">
    <property type="entry name" value="HTHMERR"/>
</dbReference>
<dbReference type="SMART" id="SM00422">
    <property type="entry name" value="HTH_MERR"/>
    <property type="match status" value="1"/>
</dbReference>
<dbReference type="SUPFAM" id="SSF46955">
    <property type="entry name" value="Putative DNA-binding domain"/>
    <property type="match status" value="1"/>
</dbReference>
<dbReference type="PROSITE" id="PS00552">
    <property type="entry name" value="HTH_MERR_1"/>
    <property type="match status" value="1"/>
</dbReference>
<dbReference type="PROSITE" id="PS50937">
    <property type="entry name" value="HTH_MERR_2"/>
    <property type="match status" value="1"/>
</dbReference>
<gene>
    <name type="primary">soxR</name>
    <name type="ordered locus">Z5662</name>
    <name type="ordered locus">ECs5045</name>
</gene>
<protein>
    <recommendedName>
        <fullName>Redox-sensitive transcriptional activator SoxR</fullName>
    </recommendedName>
</protein>